<proteinExistence type="inferred from homology"/>
<accession>E1BNS0</accession>
<organism>
    <name type="scientific">Bos taurus</name>
    <name type="common">Bovine</name>
    <dbReference type="NCBI Taxonomy" id="9913"/>
    <lineage>
        <taxon>Eukaryota</taxon>
        <taxon>Metazoa</taxon>
        <taxon>Chordata</taxon>
        <taxon>Craniata</taxon>
        <taxon>Vertebrata</taxon>
        <taxon>Euteleostomi</taxon>
        <taxon>Mammalia</taxon>
        <taxon>Eutheria</taxon>
        <taxon>Laurasiatheria</taxon>
        <taxon>Artiodactyla</taxon>
        <taxon>Ruminantia</taxon>
        <taxon>Pecora</taxon>
        <taxon>Bovidae</taxon>
        <taxon>Bovinae</taxon>
        <taxon>Bos</taxon>
    </lineage>
</organism>
<sequence>MEPPMDPSGGEQEPGAVRLLDLPWEDVLLPHVLSRVPLRQLLWLQRVSRAFRALVQLHLARLRRFDAAQVGPQIPRAALAWLLRDAEGLQELALAPCHEWLSDEDLVPVLARNPQLRSVALAGCGQLSRRALGALAEGCPRLQRLSLAHCDWVDGLALRGLADRCPALEELDLTACRQLKDEAIVYLAQRRGAGLRNLSLAVNANVGDTAVQELARNCPELQHLDLTGCLRVGSDGIRTLAEYCPALRSLRVRHCHHVAEPSLSRLRKRGVDIDVEPPLHQALVLLQDMVGFAPFVNLQV</sequence>
<dbReference type="EMBL" id="AAFC03082941">
    <property type="status" value="NOT_ANNOTATED_CDS"/>
    <property type="molecule type" value="Genomic_DNA"/>
</dbReference>
<dbReference type="SMR" id="E1BNS0"/>
<dbReference type="FunCoup" id="E1BNS0">
    <property type="interactions" value="185"/>
</dbReference>
<dbReference type="STRING" id="9913.ENSBTAP00000003249"/>
<dbReference type="PaxDb" id="9913-ENSBTAP00000003249"/>
<dbReference type="eggNOG" id="KOG1947">
    <property type="taxonomic scope" value="Eukaryota"/>
</dbReference>
<dbReference type="HOGENOM" id="CLU_065717_2_0_1"/>
<dbReference type="InParanoid" id="E1BNS0"/>
<dbReference type="TreeFam" id="TF326769"/>
<dbReference type="UniPathway" id="UPA00143"/>
<dbReference type="Proteomes" id="UP000009136">
    <property type="component" value="Unplaced"/>
</dbReference>
<dbReference type="GO" id="GO:0005737">
    <property type="term" value="C:cytoplasm"/>
    <property type="evidence" value="ECO:0000250"/>
    <property type="project" value="UniProtKB"/>
</dbReference>
<dbReference type="GO" id="GO:0019005">
    <property type="term" value="C:SCF ubiquitin ligase complex"/>
    <property type="evidence" value="ECO:0000250"/>
    <property type="project" value="UniProtKB"/>
</dbReference>
<dbReference type="GO" id="GO:0030282">
    <property type="term" value="P:bone mineralization"/>
    <property type="evidence" value="ECO:0000250"/>
    <property type="project" value="UniProtKB"/>
</dbReference>
<dbReference type="GO" id="GO:0009953">
    <property type="term" value="P:dorsal/ventral pattern formation"/>
    <property type="evidence" value="ECO:0000250"/>
    <property type="project" value="UniProtKB"/>
</dbReference>
<dbReference type="GO" id="GO:0000086">
    <property type="term" value="P:G2/M transition of mitotic cell cycle"/>
    <property type="evidence" value="ECO:0000250"/>
    <property type="project" value="UniProtKB"/>
</dbReference>
<dbReference type="GO" id="GO:0030513">
    <property type="term" value="P:positive regulation of BMP signaling pathway"/>
    <property type="evidence" value="ECO:0000250"/>
    <property type="project" value="UniProtKB"/>
</dbReference>
<dbReference type="GO" id="GO:0016567">
    <property type="term" value="P:protein ubiquitination"/>
    <property type="evidence" value="ECO:0000250"/>
    <property type="project" value="UniProtKB"/>
</dbReference>
<dbReference type="GO" id="GO:0031146">
    <property type="term" value="P:SCF-dependent proteasomal ubiquitin-dependent protein catabolic process"/>
    <property type="evidence" value="ECO:0000250"/>
    <property type="project" value="UniProtKB"/>
</dbReference>
<dbReference type="CDD" id="cd22126">
    <property type="entry name" value="F-box_FBXL15"/>
    <property type="match status" value="1"/>
</dbReference>
<dbReference type="FunFam" id="3.80.10.10:FF:000113">
    <property type="entry name" value="F-box/LRR-repeat protein 15 isoform X1"/>
    <property type="match status" value="1"/>
</dbReference>
<dbReference type="Gene3D" id="3.80.10.10">
    <property type="entry name" value="Ribonuclease Inhibitor"/>
    <property type="match status" value="1"/>
</dbReference>
<dbReference type="InterPro" id="IPR036047">
    <property type="entry name" value="F-box-like_dom_sf"/>
</dbReference>
<dbReference type="InterPro" id="IPR001810">
    <property type="entry name" value="F-box_dom"/>
</dbReference>
<dbReference type="InterPro" id="IPR050648">
    <property type="entry name" value="F-box_LRR-repeat"/>
</dbReference>
<dbReference type="InterPro" id="IPR001611">
    <property type="entry name" value="Leu-rich_rpt"/>
</dbReference>
<dbReference type="InterPro" id="IPR006553">
    <property type="entry name" value="Leu-rich_rpt_Cys-con_subtyp"/>
</dbReference>
<dbReference type="InterPro" id="IPR032675">
    <property type="entry name" value="LRR_dom_sf"/>
</dbReference>
<dbReference type="InterPro" id="IPR055411">
    <property type="entry name" value="LRR_FXL15/At3g58940/PEG3-like"/>
</dbReference>
<dbReference type="PANTHER" id="PTHR13382:SF79">
    <property type="entry name" value="F-BOX AND LEUCINE RICH REPEAT PROTEIN 15"/>
    <property type="match status" value="1"/>
</dbReference>
<dbReference type="PANTHER" id="PTHR13382">
    <property type="entry name" value="MITOCHONDRIAL ATP SYNTHASE COUPLING FACTOR B"/>
    <property type="match status" value="1"/>
</dbReference>
<dbReference type="Pfam" id="PF00646">
    <property type="entry name" value="F-box"/>
    <property type="match status" value="1"/>
</dbReference>
<dbReference type="Pfam" id="PF13516">
    <property type="entry name" value="LRR_6"/>
    <property type="match status" value="1"/>
</dbReference>
<dbReference type="Pfam" id="PF24758">
    <property type="entry name" value="LRR_At5g56370"/>
    <property type="match status" value="1"/>
</dbReference>
<dbReference type="SMART" id="SM00367">
    <property type="entry name" value="LRR_CC"/>
    <property type="match status" value="6"/>
</dbReference>
<dbReference type="SUPFAM" id="SSF81383">
    <property type="entry name" value="F-box domain"/>
    <property type="match status" value="1"/>
</dbReference>
<dbReference type="SUPFAM" id="SSF52047">
    <property type="entry name" value="RNI-like"/>
    <property type="match status" value="1"/>
</dbReference>
<reference key="1">
    <citation type="journal article" date="2009" name="Science">
        <title>The genome sequence of taurine cattle: a window to ruminant biology and evolution.</title>
        <authorList>
            <consortium name="The bovine genome sequencing and analysis consortium"/>
        </authorList>
    </citation>
    <scope>NUCLEOTIDE SEQUENCE [LARGE SCALE GENOMIC DNA]</scope>
    <source>
        <strain>Hereford</strain>
    </source>
</reference>
<gene>
    <name type="primary">FBXL15</name>
</gene>
<protein>
    <recommendedName>
        <fullName>F-box/LRR-repeat protein 15</fullName>
    </recommendedName>
</protein>
<keyword id="KW-0007">Acetylation</keyword>
<keyword id="KW-0963">Cytoplasm</keyword>
<keyword id="KW-0433">Leucine-rich repeat</keyword>
<keyword id="KW-1185">Reference proteome</keyword>
<keyword id="KW-0677">Repeat</keyword>
<keyword id="KW-0833">Ubl conjugation pathway</keyword>
<feature type="chain" id="PRO_0000410903" description="F-box/LRR-repeat protein 15">
    <location>
        <begin position="1"/>
        <end position="300"/>
    </location>
</feature>
<feature type="domain" description="F-box">
    <location>
        <begin position="19"/>
        <end position="66"/>
    </location>
</feature>
<feature type="repeat" description="LRR 1">
    <location>
        <begin position="141"/>
        <end position="162"/>
    </location>
</feature>
<feature type="repeat" description="LRR 2">
    <location>
        <begin position="167"/>
        <end position="188"/>
    </location>
</feature>
<feature type="repeat" description="LRR 3">
    <location>
        <begin position="194"/>
        <end position="215"/>
    </location>
</feature>
<feature type="repeat" description="LRR 4">
    <location>
        <begin position="220"/>
        <end position="241"/>
    </location>
</feature>
<feature type="repeat" description="LRR 5">
    <location>
        <begin position="246"/>
        <end position="267"/>
    </location>
</feature>
<feature type="region of interest" description="Interaction with SMURF1" evidence="1">
    <location>
        <begin position="113"/>
        <end position="269"/>
    </location>
</feature>
<feature type="modified residue" description="N-acetylmethionine" evidence="2">
    <location>
        <position position="1"/>
    </location>
</feature>
<name>FXL15_BOVIN</name>
<comment type="function">
    <text evidence="1">Substrate recognition component of a SCF (SKP1-CUL1-F-box protein) E3 ubiquitin-protein ligase complex which mediates the ubiquitination and subsequent proteasomal degradation of SMURF1, thereby acting as a positive regulator of the BMP signaling pathway. Required for dorsal/ventral pattern formation and bone mass maintenance. Also mediates ubiquitination of SMURF2 and WWP2 (By similarity).</text>
</comment>
<comment type="pathway">
    <text>Protein modification; protein ubiquitination.</text>
</comment>
<comment type="subunit">
    <text evidence="1">Part of the SCF (SKP1-CUL1-F-box) E3 ubiquitin-protein ligase complex SCF(FBXL15) composed of CUL1, SKP1, RBX1 and FBXL15.</text>
</comment>
<comment type="subcellular location">
    <subcellularLocation>
        <location evidence="1">Cytoplasm</location>
    </subcellularLocation>
</comment>
<comment type="similarity">
    <text evidence="3">Belongs to the FBXL15 family.</text>
</comment>
<evidence type="ECO:0000250" key="1"/>
<evidence type="ECO:0000250" key="2">
    <source>
        <dbReference type="UniProtKB" id="Q9H469"/>
    </source>
</evidence>
<evidence type="ECO:0000305" key="3"/>